<accession>Q9CP74</accession>
<reference key="1">
    <citation type="journal article" date="2001" name="Proc. Natl. Acad. Sci. U.S.A.">
        <title>Complete genomic sequence of Pasteurella multocida Pm70.</title>
        <authorList>
            <person name="May B.J."/>
            <person name="Zhang Q."/>
            <person name="Li L.L."/>
            <person name="Paustian M.L."/>
            <person name="Whittam T.S."/>
            <person name="Kapur V."/>
        </authorList>
    </citation>
    <scope>NUCLEOTIDE SEQUENCE [LARGE SCALE GENOMIC DNA]</scope>
    <source>
        <strain>Pm70</strain>
    </source>
</reference>
<sequence length="658" mass="75588">MFQNNPLLSQLKQQIRDSKQQVEGIVKGSDKAFGFLECDKKSYFIPPAAMKKVMHGDKIKALIEVVGEKEQAEPDALIEPMLTRFIARVRFNKDKKLQVLVDHPQINQAIGAAQDKSITETLQEGDWVVATLKTHPLRDDRFFFAQIQQFICRAEDELAPWWVTLARHGQSRYPVQGCADYPMIDQHTREDLTALHFITIDAETTLDMDDALYLEPIHQAEEQIGWRLVVAVADPTAYIPLDSQIEQEARQRCFTNYLPGFNIPMLPPELSDERCSLMQDEIRPALVCYIETDLTGNITEKPRFVSAYVQSKAKLAYDHVSDYLENCLDAWQPENPQIAQQIQWLHQFTQARIEWRKQHALLFKEKPDYSFILAENGSVQAIQAQYRRIANQMVEECMILANICAAHYLDEHAKCGIFNTHSGFDKKYLESAHQFLLNQLSDETNQAVLATRYSVANLTTLAGYCQMRHDIELLNSDYLELRLRRFLTFAEFKSEIAPHFGLGLSGYATWTSPIRKYSDMVNHRLIKAVLTQQTCEKPQDDLFVRLQEARRQNRLVERDIADWLYCRYLATQVEQKPTFQAEIQDVMRGGLRVQLLANGAPMFIPASLIHDNKEAIQVNTDTLTLSIQGEVKYKLGDIIQVQLLDVKEETRSIVGTLC</sequence>
<protein>
    <recommendedName>
        <fullName evidence="2">Exoribonuclease 2</fullName>
        <ecNumber evidence="2">3.1.13.1</ecNumber>
    </recommendedName>
    <alternativeName>
        <fullName evidence="2">Exoribonuclease II</fullName>
        <shortName evidence="2">RNase II</shortName>
        <shortName evidence="2">Ribonuclease II</shortName>
    </alternativeName>
</protein>
<feature type="chain" id="PRO_0000166385" description="Exoribonuclease 2">
    <location>
        <begin position="1"/>
        <end position="658"/>
    </location>
</feature>
<feature type="domain" description="RNB" evidence="1">
    <location>
        <begin position="189"/>
        <end position="531"/>
    </location>
</feature>
<feature type="domain" description="S1 motif" evidence="2">
    <location>
        <begin position="576"/>
        <end position="658"/>
    </location>
</feature>
<name>RNB_PASMU</name>
<proteinExistence type="inferred from homology"/>
<organism>
    <name type="scientific">Pasteurella multocida (strain Pm70)</name>
    <dbReference type="NCBI Taxonomy" id="272843"/>
    <lineage>
        <taxon>Bacteria</taxon>
        <taxon>Pseudomonadati</taxon>
        <taxon>Pseudomonadota</taxon>
        <taxon>Gammaproteobacteria</taxon>
        <taxon>Pasteurellales</taxon>
        <taxon>Pasteurellaceae</taxon>
        <taxon>Pasteurella</taxon>
    </lineage>
</organism>
<gene>
    <name evidence="2" type="primary">rnb</name>
    <name type="ordered locus">PM0181</name>
</gene>
<dbReference type="EC" id="3.1.13.1" evidence="2"/>
<dbReference type="EMBL" id="AE004439">
    <property type="protein sequence ID" value="AAK02265.1"/>
    <property type="molecule type" value="Genomic_DNA"/>
</dbReference>
<dbReference type="RefSeq" id="WP_005723421.1">
    <property type="nucleotide sequence ID" value="NC_002663.1"/>
</dbReference>
<dbReference type="SMR" id="Q9CP74"/>
<dbReference type="STRING" id="272843.PM0181"/>
<dbReference type="EnsemblBacteria" id="AAK02265">
    <property type="protein sequence ID" value="AAK02265"/>
    <property type="gene ID" value="PM0181"/>
</dbReference>
<dbReference type="KEGG" id="pmu:PM0181"/>
<dbReference type="PATRIC" id="fig|272843.6.peg.186"/>
<dbReference type="HOGENOM" id="CLU_002333_7_3_6"/>
<dbReference type="OrthoDB" id="9764149at2"/>
<dbReference type="Proteomes" id="UP000000809">
    <property type="component" value="Chromosome"/>
</dbReference>
<dbReference type="GO" id="GO:0005829">
    <property type="term" value="C:cytosol"/>
    <property type="evidence" value="ECO:0007669"/>
    <property type="project" value="UniProtKB-ARBA"/>
</dbReference>
<dbReference type="GO" id="GO:0008859">
    <property type="term" value="F:exoribonuclease II activity"/>
    <property type="evidence" value="ECO:0007669"/>
    <property type="project" value="UniProtKB-UniRule"/>
</dbReference>
<dbReference type="GO" id="GO:0003723">
    <property type="term" value="F:RNA binding"/>
    <property type="evidence" value="ECO:0007669"/>
    <property type="project" value="UniProtKB-KW"/>
</dbReference>
<dbReference type="GO" id="GO:0006402">
    <property type="term" value="P:mRNA catabolic process"/>
    <property type="evidence" value="ECO:0007669"/>
    <property type="project" value="UniProtKB-UniRule"/>
</dbReference>
<dbReference type="Gene3D" id="2.40.50.640">
    <property type="match status" value="1"/>
</dbReference>
<dbReference type="Gene3D" id="2.40.50.140">
    <property type="entry name" value="Nucleic acid-binding proteins"/>
    <property type="match status" value="2"/>
</dbReference>
<dbReference type="HAMAP" id="MF_01036">
    <property type="entry name" value="RNase_II"/>
    <property type="match status" value="1"/>
</dbReference>
<dbReference type="InterPro" id="IPR011129">
    <property type="entry name" value="CSD"/>
</dbReference>
<dbReference type="InterPro" id="IPR012340">
    <property type="entry name" value="NA-bd_OB-fold"/>
</dbReference>
<dbReference type="InterPro" id="IPR013223">
    <property type="entry name" value="RNase_B_OB_dom"/>
</dbReference>
<dbReference type="InterPro" id="IPR011804">
    <property type="entry name" value="RNase_II"/>
</dbReference>
<dbReference type="InterPro" id="IPR001900">
    <property type="entry name" value="RNase_II/R"/>
</dbReference>
<dbReference type="InterPro" id="IPR022966">
    <property type="entry name" value="RNase_II/R_CS"/>
</dbReference>
<dbReference type="InterPro" id="IPR004476">
    <property type="entry name" value="RNase_II/RNase_R"/>
</dbReference>
<dbReference type="InterPro" id="IPR050180">
    <property type="entry name" value="RNR_Ribonuclease"/>
</dbReference>
<dbReference type="InterPro" id="IPR003029">
    <property type="entry name" value="S1_domain"/>
</dbReference>
<dbReference type="NCBIfam" id="TIGR00358">
    <property type="entry name" value="3_prime_RNase"/>
    <property type="match status" value="1"/>
</dbReference>
<dbReference type="NCBIfam" id="NF003455">
    <property type="entry name" value="PRK05054.1"/>
    <property type="match status" value="1"/>
</dbReference>
<dbReference type="NCBIfam" id="TIGR02062">
    <property type="entry name" value="RNase_B"/>
    <property type="match status" value="1"/>
</dbReference>
<dbReference type="PANTHER" id="PTHR23355:SF37">
    <property type="entry name" value="EXORIBONUCLEASE 2"/>
    <property type="match status" value="1"/>
</dbReference>
<dbReference type="PANTHER" id="PTHR23355">
    <property type="entry name" value="RIBONUCLEASE"/>
    <property type="match status" value="1"/>
</dbReference>
<dbReference type="Pfam" id="PF08206">
    <property type="entry name" value="OB_RNB"/>
    <property type="match status" value="1"/>
</dbReference>
<dbReference type="Pfam" id="PF00773">
    <property type="entry name" value="RNB"/>
    <property type="match status" value="1"/>
</dbReference>
<dbReference type="Pfam" id="PF00575">
    <property type="entry name" value="S1"/>
    <property type="match status" value="1"/>
</dbReference>
<dbReference type="SMART" id="SM00357">
    <property type="entry name" value="CSP"/>
    <property type="match status" value="1"/>
</dbReference>
<dbReference type="SMART" id="SM00955">
    <property type="entry name" value="RNB"/>
    <property type="match status" value="1"/>
</dbReference>
<dbReference type="SUPFAM" id="SSF50249">
    <property type="entry name" value="Nucleic acid-binding proteins"/>
    <property type="match status" value="4"/>
</dbReference>
<dbReference type="PROSITE" id="PS01175">
    <property type="entry name" value="RIBONUCLEASE_II"/>
    <property type="match status" value="1"/>
</dbReference>
<dbReference type="PROSITE" id="PS50126">
    <property type="entry name" value="S1"/>
    <property type="match status" value="1"/>
</dbReference>
<keyword id="KW-0963">Cytoplasm</keyword>
<keyword id="KW-0269">Exonuclease</keyword>
<keyword id="KW-0378">Hydrolase</keyword>
<keyword id="KW-0540">Nuclease</keyword>
<keyword id="KW-1185">Reference proteome</keyword>
<keyword id="KW-0694">RNA-binding</keyword>
<evidence type="ECO:0000255" key="1"/>
<evidence type="ECO:0000255" key="2">
    <source>
        <dbReference type="HAMAP-Rule" id="MF_01036"/>
    </source>
</evidence>
<comment type="function">
    <text evidence="2">Involved in mRNA degradation. Hydrolyzes single-stranded polyribonucleotides processively in the 3' to 5' direction.</text>
</comment>
<comment type="catalytic activity">
    <reaction evidence="2">
        <text>Exonucleolytic cleavage in the 3'- to 5'-direction to yield nucleoside 5'-phosphates.</text>
        <dbReference type="EC" id="3.1.13.1"/>
    </reaction>
</comment>
<comment type="subcellular location">
    <subcellularLocation>
        <location evidence="2">Cytoplasm</location>
    </subcellularLocation>
</comment>
<comment type="similarity">
    <text evidence="2">Belongs to the RNR ribonuclease family. RNase II subfamily.</text>
</comment>